<protein>
    <recommendedName>
        <fullName evidence="1">Putative 3-methyladenine DNA glycosylase</fullName>
        <ecNumber evidence="1">3.2.2.-</ecNumber>
    </recommendedName>
</protein>
<comment type="similarity">
    <text evidence="1">Belongs to the DNA glycosylase MPG family.</text>
</comment>
<feature type="chain" id="PRO_0000100100" description="Putative 3-methyladenine DNA glycosylase">
    <location>
        <begin position="1"/>
        <end position="233"/>
    </location>
</feature>
<sequence>MMNDAKRNQFREDDEEDRLIDWGSTQSLQSQFFDRRPAVVARQLLGCGFARRIEGVWVGGWIVETEAYLSSRDAASHSARGEKPGNASMFGRPSTLYVYPIHAKHCVNLVTESVGCGSAVLIRALQPVWGIDRMFQHRGLHRSETTDGRALTTGPGRLCQSLAIDRTCDGVDPIRDPNWCVFSGPKLPSSRVTTTPRIGISQAAELPLRFFVDGNRYVSGLVRHHRRPRRDSL</sequence>
<dbReference type="EC" id="3.2.2.-" evidence="1"/>
<dbReference type="EMBL" id="BX294147">
    <property type="protein sequence ID" value="CAD78517.1"/>
    <property type="molecule type" value="Genomic_DNA"/>
</dbReference>
<dbReference type="RefSeq" id="NP_868239.1">
    <property type="nucleotide sequence ID" value="NC_005027.1"/>
</dbReference>
<dbReference type="SMR" id="Q7UG12"/>
<dbReference type="STRING" id="243090.RB8205"/>
<dbReference type="EnsemblBacteria" id="CAD78517">
    <property type="protein sequence ID" value="CAD78517"/>
    <property type="gene ID" value="RB8205"/>
</dbReference>
<dbReference type="KEGG" id="rba:RB8205"/>
<dbReference type="PATRIC" id="fig|243090.15.peg.3954"/>
<dbReference type="eggNOG" id="COG2094">
    <property type="taxonomic scope" value="Bacteria"/>
</dbReference>
<dbReference type="HOGENOM" id="CLU_060471_2_0_0"/>
<dbReference type="InParanoid" id="Q7UG12"/>
<dbReference type="OrthoDB" id="9794313at2"/>
<dbReference type="Proteomes" id="UP000001025">
    <property type="component" value="Chromosome"/>
</dbReference>
<dbReference type="GO" id="GO:0003905">
    <property type="term" value="F:alkylbase DNA N-glycosylase activity"/>
    <property type="evidence" value="ECO:0000318"/>
    <property type="project" value="GO_Central"/>
</dbReference>
<dbReference type="GO" id="GO:0003677">
    <property type="term" value="F:DNA binding"/>
    <property type="evidence" value="ECO:0007669"/>
    <property type="project" value="InterPro"/>
</dbReference>
<dbReference type="GO" id="GO:0006284">
    <property type="term" value="P:base-excision repair"/>
    <property type="evidence" value="ECO:0000318"/>
    <property type="project" value="GO_Central"/>
</dbReference>
<dbReference type="CDD" id="cd00540">
    <property type="entry name" value="AAG"/>
    <property type="match status" value="1"/>
</dbReference>
<dbReference type="FunFam" id="3.10.300.10:FF:000001">
    <property type="entry name" value="Putative 3-methyladenine DNA glycosylase"/>
    <property type="match status" value="1"/>
</dbReference>
<dbReference type="Gene3D" id="3.10.300.10">
    <property type="entry name" value="Methylpurine-DNA glycosylase (MPG)"/>
    <property type="match status" value="1"/>
</dbReference>
<dbReference type="HAMAP" id="MF_00527">
    <property type="entry name" value="3MGH"/>
    <property type="match status" value="1"/>
</dbReference>
<dbReference type="InterPro" id="IPR011034">
    <property type="entry name" value="Formyl_transferase-like_C_sf"/>
</dbReference>
<dbReference type="InterPro" id="IPR003180">
    <property type="entry name" value="MPG"/>
</dbReference>
<dbReference type="InterPro" id="IPR036995">
    <property type="entry name" value="MPG_sf"/>
</dbReference>
<dbReference type="NCBIfam" id="TIGR00567">
    <property type="entry name" value="3mg"/>
    <property type="match status" value="1"/>
</dbReference>
<dbReference type="PANTHER" id="PTHR10429">
    <property type="entry name" value="DNA-3-METHYLADENINE GLYCOSYLASE"/>
    <property type="match status" value="1"/>
</dbReference>
<dbReference type="PANTHER" id="PTHR10429:SF0">
    <property type="entry name" value="DNA-3-METHYLADENINE GLYCOSYLASE"/>
    <property type="match status" value="1"/>
</dbReference>
<dbReference type="Pfam" id="PF02245">
    <property type="entry name" value="Pur_DNA_glyco"/>
    <property type="match status" value="1"/>
</dbReference>
<dbReference type="SUPFAM" id="SSF50486">
    <property type="entry name" value="FMT C-terminal domain-like"/>
    <property type="match status" value="1"/>
</dbReference>
<accession>Q7UG12</accession>
<keyword id="KW-0227">DNA damage</keyword>
<keyword id="KW-0234">DNA repair</keyword>
<keyword id="KW-0378">Hydrolase</keyword>
<keyword id="KW-1185">Reference proteome</keyword>
<gene>
    <name type="primary">mpg</name>
    <name type="ordered locus">RB8205</name>
</gene>
<evidence type="ECO:0000255" key="1">
    <source>
        <dbReference type="HAMAP-Rule" id="MF_00527"/>
    </source>
</evidence>
<reference key="1">
    <citation type="journal article" date="2003" name="Proc. Natl. Acad. Sci. U.S.A.">
        <title>Complete genome sequence of the marine planctomycete Pirellula sp. strain 1.</title>
        <authorList>
            <person name="Gloeckner F.O."/>
            <person name="Kube M."/>
            <person name="Bauer M."/>
            <person name="Teeling H."/>
            <person name="Lombardot T."/>
            <person name="Ludwig W."/>
            <person name="Gade D."/>
            <person name="Beck A."/>
            <person name="Borzym K."/>
            <person name="Heitmann K."/>
            <person name="Rabus R."/>
            <person name="Schlesner H."/>
            <person name="Amann R."/>
            <person name="Reinhardt R."/>
        </authorList>
    </citation>
    <scope>NUCLEOTIDE SEQUENCE [LARGE SCALE GENOMIC DNA]</scope>
    <source>
        <strain>DSM 10527 / NCIMB 13988 / SH1</strain>
    </source>
</reference>
<organism>
    <name type="scientific">Rhodopirellula baltica (strain DSM 10527 / NCIMB 13988 / SH1)</name>
    <dbReference type="NCBI Taxonomy" id="243090"/>
    <lineage>
        <taxon>Bacteria</taxon>
        <taxon>Pseudomonadati</taxon>
        <taxon>Planctomycetota</taxon>
        <taxon>Planctomycetia</taxon>
        <taxon>Pirellulales</taxon>
        <taxon>Pirellulaceae</taxon>
        <taxon>Rhodopirellula</taxon>
    </lineage>
</organism>
<proteinExistence type="inferred from homology"/>
<name>3MGH_RHOBA</name>